<feature type="signal peptide">
    <location>
        <begin position="1"/>
        <end position="15"/>
    </location>
</feature>
<feature type="chain" id="PRO_0000008622" description="Lipase 4">
    <location>
        <begin position="16"/>
        <end position="549"/>
    </location>
</feature>
<feature type="active site" description="Acyl-ester intermediate" evidence="3">
    <location>
        <position position="224"/>
    </location>
</feature>
<feature type="active site" description="Charge relay system" evidence="1">
    <location>
        <position position="356"/>
    </location>
</feature>
<feature type="active site" description="Charge relay system" evidence="1">
    <location>
        <position position="464"/>
    </location>
</feature>
<feature type="glycosylation site" description="N-linked (GlcNAc...) asparagine" evidence="2">
    <location>
        <position position="366"/>
    </location>
</feature>
<feature type="disulfide bond" evidence="1">
    <location>
        <begin position="75"/>
        <end position="112"/>
    </location>
</feature>
<feature type="disulfide bond" evidence="1">
    <location>
        <begin position="283"/>
        <end position="292"/>
    </location>
</feature>
<evidence type="ECO:0000250" key="1"/>
<evidence type="ECO:0000255" key="2"/>
<evidence type="ECO:0000255" key="3">
    <source>
        <dbReference type="PROSITE-ProRule" id="PRU10039"/>
    </source>
</evidence>
<evidence type="ECO:0000305" key="4"/>
<name>LIP4_DIURU</name>
<gene>
    <name type="primary">LIP4</name>
</gene>
<reference key="1">
    <citation type="journal article" date="1993" name="Gene">
        <title>Cloning and analysis of Candida cylindracea lipase sequences.</title>
        <authorList>
            <person name="Lotti M."/>
            <person name="Grandori R."/>
            <person name="Fusetti F."/>
            <person name="Longhi S."/>
            <person name="Brocca S."/>
            <person name="Tramontano A."/>
            <person name="Alberghina L."/>
        </authorList>
    </citation>
    <scope>NUCLEOTIDE SEQUENCE [GENOMIC DNA]</scope>
    <source>
        <strain>ATCC 14830 / CBS 6330 / DSM 2031 / MS-5 / NRRL Y-17506</strain>
    </source>
</reference>
<reference key="2">
    <citation type="journal article" date="1998" name="Yeast">
        <title>Candida rugosa lipases: molecular biology and versatility in biotechnology.</title>
        <authorList>
            <person name="Benjamin S."/>
            <person name="Pandey A."/>
        </authorList>
    </citation>
    <scope>REVIEW</scope>
</reference>
<protein>
    <recommendedName>
        <fullName>Lipase 4</fullName>
        <ecNumber>3.1.1.3</ecNumber>
    </recommendedName>
</protein>
<accession>P32948</accession>
<comment type="catalytic activity">
    <reaction>
        <text>a triacylglycerol + H2O = a diacylglycerol + a fatty acid + H(+)</text>
        <dbReference type="Rhea" id="RHEA:12044"/>
        <dbReference type="ChEBI" id="CHEBI:15377"/>
        <dbReference type="ChEBI" id="CHEBI:15378"/>
        <dbReference type="ChEBI" id="CHEBI:17855"/>
        <dbReference type="ChEBI" id="CHEBI:18035"/>
        <dbReference type="ChEBI" id="CHEBI:28868"/>
        <dbReference type="EC" id="3.1.1.3"/>
    </reaction>
</comment>
<comment type="similarity">
    <text evidence="4">Belongs to the type-B carboxylesterase/lipase family.</text>
</comment>
<proteinExistence type="inferred from homology"/>
<organism>
    <name type="scientific">Diutina rugosa</name>
    <name type="common">Yeast</name>
    <name type="synonym">Candida rugosa</name>
    <dbReference type="NCBI Taxonomy" id="5481"/>
    <lineage>
        <taxon>Eukaryota</taxon>
        <taxon>Fungi</taxon>
        <taxon>Dikarya</taxon>
        <taxon>Ascomycota</taxon>
        <taxon>Saccharomycotina</taxon>
        <taxon>Pichiomycetes</taxon>
        <taxon>Debaryomycetaceae</taxon>
        <taxon>Diutina</taxon>
    </lineage>
</organism>
<keyword id="KW-1015">Disulfide bond</keyword>
<keyword id="KW-0325">Glycoprotein</keyword>
<keyword id="KW-0378">Hydrolase</keyword>
<keyword id="KW-0442">Lipid degradation</keyword>
<keyword id="KW-0443">Lipid metabolism</keyword>
<keyword id="KW-0732">Signal</keyword>
<dbReference type="EC" id="3.1.1.3"/>
<dbReference type="EMBL" id="X66007">
    <property type="protein sequence ID" value="CAA46806.1"/>
    <property type="molecule type" value="Genomic_DNA"/>
</dbReference>
<dbReference type="PIR" id="JN0552">
    <property type="entry name" value="JN0552"/>
</dbReference>
<dbReference type="SMR" id="P32948"/>
<dbReference type="ESTHER" id="canru-4lipa">
    <property type="family name" value="Fungal_carboxylesterase_lipase"/>
</dbReference>
<dbReference type="GlyCosmos" id="P32948">
    <property type="glycosylation" value="1 site, No reported glycans"/>
</dbReference>
<dbReference type="GO" id="GO:0004806">
    <property type="term" value="F:triacylglycerol lipase activity"/>
    <property type="evidence" value="ECO:0007669"/>
    <property type="project" value="UniProtKB-EC"/>
</dbReference>
<dbReference type="GO" id="GO:0016042">
    <property type="term" value="P:lipid catabolic process"/>
    <property type="evidence" value="ECO:0007669"/>
    <property type="project" value="UniProtKB-KW"/>
</dbReference>
<dbReference type="CDD" id="cd00312">
    <property type="entry name" value="Esterase_lipase"/>
    <property type="match status" value="1"/>
</dbReference>
<dbReference type="Gene3D" id="3.40.50.1820">
    <property type="entry name" value="alpha/beta hydrolase"/>
    <property type="match status" value="1"/>
</dbReference>
<dbReference type="InterPro" id="IPR029058">
    <property type="entry name" value="AB_hydrolase_fold"/>
</dbReference>
<dbReference type="InterPro" id="IPR050654">
    <property type="entry name" value="AChE-related_enzymes"/>
</dbReference>
<dbReference type="InterPro" id="IPR002018">
    <property type="entry name" value="CarbesteraseB"/>
</dbReference>
<dbReference type="InterPro" id="IPR019826">
    <property type="entry name" value="Carboxylesterase_B_AS"/>
</dbReference>
<dbReference type="InterPro" id="IPR019819">
    <property type="entry name" value="Carboxylesterase_B_CS"/>
</dbReference>
<dbReference type="PANTHER" id="PTHR43918">
    <property type="entry name" value="ACETYLCHOLINESTERASE"/>
    <property type="match status" value="1"/>
</dbReference>
<dbReference type="PANTHER" id="PTHR43918:SF4">
    <property type="entry name" value="CARBOXYLIC ESTER HYDROLASE"/>
    <property type="match status" value="1"/>
</dbReference>
<dbReference type="Pfam" id="PF00135">
    <property type="entry name" value="COesterase"/>
    <property type="match status" value="1"/>
</dbReference>
<dbReference type="SUPFAM" id="SSF53474">
    <property type="entry name" value="alpha/beta-Hydrolases"/>
    <property type="match status" value="1"/>
</dbReference>
<dbReference type="PROSITE" id="PS00122">
    <property type="entry name" value="CARBOXYLESTERASE_B_1"/>
    <property type="match status" value="1"/>
</dbReference>
<dbReference type="PROSITE" id="PS00941">
    <property type="entry name" value="CARBOXYLESTERASE_B_2"/>
    <property type="match status" value="1"/>
</dbReference>
<sequence length="549" mass="58571">MKLALVLSLIVSVAAAPTATLANGDTITGLNAIINEAFLGIPFAQPPVGNLRFKPPVPYSASLNGQKFTSYGPSCMQMNPLGNWDSSLPKAAINSLMQSKLFQAVLPNGEDCLTINVVRPSGTKPGANLPVMVWIFGGGFEVGGSSLFPPAQMITASVLMGKPIIHVSMNYRVASWGFLAGPDIKAEGSGNAGLHDQRLGLQWVADNIAGFGGDPSKVTIFGESAGSMSVMCQLLWNDGDNTYNGKPLFRAAIMQSGAMVPSDPVDGPYGTQIYDQVVASAGCGSASDKLACLRSISNDKLFQATSDTPGALAYPSLRLSFLPRPDGTFITDDMFKLVRDGKCANVPVIIGDQNDEGTVFALSSLNVTTDAQARQYFKESFIHASDAEIDTLMAAYPSDITQGSPFDTGIFNAITPQFKRIAAVLGDLAFTLPRRYFLNHFQGGTKYSFLSKQLSGLPVIGTHHANDIVWQDFLVSHSSAVYNNAFIAFANDLDPNKAGLLVNWPKYTSSSQSGNNLLQINALGLYTGKDNFRTAGYDALFTNPSSFFV</sequence>